<name>RP30_VAR67</name>
<organism>
    <name type="scientific">Variola virus (isolate Human/India/Ind3/1967)</name>
    <name type="common">VARV</name>
    <name type="synonym">Smallpox virus</name>
    <dbReference type="NCBI Taxonomy" id="587200"/>
    <lineage>
        <taxon>Viruses</taxon>
        <taxon>Varidnaviria</taxon>
        <taxon>Bamfordvirae</taxon>
        <taxon>Nucleocytoviricota</taxon>
        <taxon>Pokkesviricetes</taxon>
        <taxon>Chitovirales</taxon>
        <taxon>Poxviridae</taxon>
        <taxon>Chordopoxvirinae</taxon>
        <taxon>Orthopoxvirus</taxon>
        <taxon>Variola virus</taxon>
    </lineage>
</organism>
<proteinExistence type="inferred from homology"/>
<accession>P33796</accession>
<keyword id="KW-0240">DNA-directed RNA polymerase</keyword>
<keyword id="KW-0244">Early protein</keyword>
<keyword id="KW-1035">Host cytoplasm</keyword>
<keyword id="KW-0479">Metal-binding</keyword>
<keyword id="KW-0548">Nucleotidyltransferase</keyword>
<keyword id="KW-1185">Reference proteome</keyword>
<keyword id="KW-0804">Transcription</keyword>
<keyword id="KW-0808">Transferase</keyword>
<keyword id="KW-0946">Virion</keyword>
<keyword id="KW-0862">Zinc</keyword>
<keyword id="KW-0863">Zinc-finger</keyword>
<dbReference type="EC" id="2.7.7.6"/>
<dbReference type="EMBL" id="X69198">
    <property type="protein sequence ID" value="CAA48986.1"/>
    <property type="molecule type" value="Genomic_DNA"/>
</dbReference>
<dbReference type="PIR" id="G36841">
    <property type="entry name" value="G36841"/>
</dbReference>
<dbReference type="RefSeq" id="NP_042089.1">
    <property type="nucleotide sequence ID" value="NC_001611.1"/>
</dbReference>
<dbReference type="SMR" id="P33796"/>
<dbReference type="GeneID" id="1486410"/>
<dbReference type="KEGG" id="vg:1486410"/>
<dbReference type="Proteomes" id="UP000002060">
    <property type="component" value="Segment"/>
</dbReference>
<dbReference type="GO" id="GO:0000428">
    <property type="term" value="C:DNA-directed RNA polymerase complex"/>
    <property type="evidence" value="ECO:0007669"/>
    <property type="project" value="UniProtKB-KW"/>
</dbReference>
<dbReference type="GO" id="GO:0030430">
    <property type="term" value="C:host cell cytoplasm"/>
    <property type="evidence" value="ECO:0007669"/>
    <property type="project" value="UniProtKB-SubCell"/>
</dbReference>
<dbReference type="GO" id="GO:0044423">
    <property type="term" value="C:virion component"/>
    <property type="evidence" value="ECO:0007669"/>
    <property type="project" value="UniProtKB-KW"/>
</dbReference>
<dbReference type="GO" id="GO:0003677">
    <property type="term" value="F:DNA binding"/>
    <property type="evidence" value="ECO:0007669"/>
    <property type="project" value="InterPro"/>
</dbReference>
<dbReference type="GO" id="GO:0003899">
    <property type="term" value="F:DNA-directed RNA polymerase activity"/>
    <property type="evidence" value="ECO:0007669"/>
    <property type="project" value="UniProtKB-EC"/>
</dbReference>
<dbReference type="GO" id="GO:0008270">
    <property type="term" value="F:zinc ion binding"/>
    <property type="evidence" value="ECO:0007669"/>
    <property type="project" value="UniProtKB-KW"/>
</dbReference>
<dbReference type="GO" id="GO:0006351">
    <property type="term" value="P:DNA-templated transcription"/>
    <property type="evidence" value="ECO:0007669"/>
    <property type="project" value="InterPro"/>
</dbReference>
<dbReference type="Gene3D" id="2.20.25.10">
    <property type="match status" value="1"/>
</dbReference>
<dbReference type="InterPro" id="IPR009162">
    <property type="entry name" value="RNA_pol_30_chordopoxvir-type"/>
</dbReference>
<dbReference type="InterPro" id="IPR024394">
    <property type="entry name" value="RNA_pol_30_chordopoxvir-type_N"/>
</dbReference>
<dbReference type="InterPro" id="IPR001222">
    <property type="entry name" value="Znf_TFIIS"/>
</dbReference>
<dbReference type="Pfam" id="PF12410">
    <property type="entry name" value="rpo30_N"/>
    <property type="match status" value="1"/>
</dbReference>
<dbReference type="Pfam" id="PF01096">
    <property type="entry name" value="Zn_ribbon_TFIIS"/>
    <property type="match status" value="1"/>
</dbReference>
<dbReference type="PIRSF" id="PIRSF000745">
    <property type="entry name" value="VAC_RPO30"/>
    <property type="match status" value="1"/>
</dbReference>
<dbReference type="SMART" id="SM00440">
    <property type="entry name" value="ZnF_C2C2"/>
    <property type="match status" value="1"/>
</dbReference>
<dbReference type="SUPFAM" id="SSF57783">
    <property type="entry name" value="Zinc beta-ribbon"/>
    <property type="match status" value="1"/>
</dbReference>
<dbReference type="PROSITE" id="PS00466">
    <property type="entry name" value="ZF_TFIIS_1"/>
    <property type="match status" value="1"/>
</dbReference>
<dbReference type="PROSITE" id="PS51133">
    <property type="entry name" value="ZF_TFIIS_2"/>
    <property type="match status" value="1"/>
</dbReference>
<sequence>MENVYISSYSSNEQTSMAVAATNIRELLSQYVDDANLEDLIEWAMEKSSKYYIKNIGNTKSNIEETKFESKNNIGIEYSKDSRNKLSYRNKPFIATNLEYKTLCDMIKGTSGTEKEFLRYLLFGIKCIKKGVEYNIDKIKDVSYNDYFNVLNEKYNTPCPNCKSRNTTPMMIQTRAADEPPLVRHACRDCKQHFKPPKFRAFRNLNVTTQSIHKNKEITEILPDNNPSPPESPEPASPIDDGLIRVTFDRNDEPPEDDE</sequence>
<reference key="1">
    <citation type="journal article" date="1993" name="FEBS Lett.">
        <title>Genes of variola and vaccinia viruses necessary to overcome the host protective mechanisms.</title>
        <authorList>
            <person name="Shchelkunov S.N."/>
            <person name="Blinov V.M."/>
            <person name="Sandakhchiev L.S."/>
        </authorList>
    </citation>
    <scope>NUCLEOTIDE SEQUENCE [LARGE SCALE GENOMIC DNA]</scope>
</reference>
<organismHost>
    <name type="scientific">Homo sapiens</name>
    <name type="common">Human</name>
    <dbReference type="NCBI Taxonomy" id="9606"/>
</organismHost>
<protein>
    <recommendedName>
        <fullName>DNA-directed RNA polymerase 30 kDa polypeptide</fullName>
        <ecNumber>2.7.7.6</ecNumber>
    </recommendedName>
</protein>
<evidence type="ECO:0000250" key="1">
    <source>
        <dbReference type="UniProtKB" id="O57187"/>
    </source>
</evidence>
<evidence type="ECO:0000250" key="2">
    <source>
        <dbReference type="UniProtKB" id="P21603"/>
    </source>
</evidence>
<evidence type="ECO:0000255" key="3">
    <source>
        <dbReference type="PROSITE-ProRule" id="PRU00472"/>
    </source>
</evidence>
<evidence type="ECO:0000256" key="4">
    <source>
        <dbReference type="SAM" id="MobiDB-lite"/>
    </source>
</evidence>
<evidence type="ECO:0000305" key="5"/>
<gene>
    <name type="primary">OPG066</name>
    <name type="synonym">RPO30</name>
    <name type="ORF">E4L</name>
</gene>
<feature type="chain" id="PRO_0000121458" description="DNA-directed RNA polymerase 30 kDa polypeptide">
    <location>
        <begin position="1"/>
        <end position="259"/>
    </location>
</feature>
<feature type="zinc finger region" description="TFIIS-type" evidence="3">
    <location>
        <begin position="155"/>
        <end position="195"/>
    </location>
</feature>
<feature type="region of interest" description="Disordered" evidence="4">
    <location>
        <begin position="220"/>
        <end position="259"/>
    </location>
</feature>
<feature type="compositionally biased region" description="Pro residues" evidence="4">
    <location>
        <begin position="226"/>
        <end position="236"/>
    </location>
</feature>
<feature type="binding site" evidence="3">
    <location>
        <position position="159"/>
    </location>
    <ligand>
        <name>Zn(2+)</name>
        <dbReference type="ChEBI" id="CHEBI:29105"/>
    </ligand>
</feature>
<feature type="binding site" evidence="3">
    <location>
        <position position="162"/>
    </location>
    <ligand>
        <name>Zn(2+)</name>
        <dbReference type="ChEBI" id="CHEBI:29105"/>
    </ligand>
</feature>
<feature type="binding site" evidence="3">
    <location>
        <position position="187"/>
    </location>
    <ligand>
        <name>Zn(2+)</name>
        <dbReference type="ChEBI" id="CHEBI:29105"/>
    </ligand>
</feature>
<feature type="binding site" evidence="3">
    <location>
        <position position="190"/>
    </location>
    <ligand>
        <name>Zn(2+)</name>
        <dbReference type="ChEBI" id="CHEBI:29105"/>
    </ligand>
</feature>
<comment type="function">
    <text evidence="1">Part of the DNA-dependent RNA polymerase which catalyzes the transcription of viral DNA into RNA using the four ribonucleoside triphosphates as substrates. Responsible for the transcription of early, intermediate and late genes. DNA-dependent RNA polymerase associates with the early transcription factor (ETF), itself composed of OPG118 and OPG134, thereby allowing the early genes transcription. Late transcription, and probably also intermediate transcription, require newly synthesized RNA polymerase.</text>
</comment>
<comment type="catalytic activity">
    <reaction>
        <text>RNA(n) + a ribonucleoside 5'-triphosphate = RNA(n+1) + diphosphate</text>
        <dbReference type="Rhea" id="RHEA:21248"/>
        <dbReference type="Rhea" id="RHEA-COMP:14527"/>
        <dbReference type="Rhea" id="RHEA-COMP:17342"/>
        <dbReference type="ChEBI" id="CHEBI:33019"/>
        <dbReference type="ChEBI" id="CHEBI:61557"/>
        <dbReference type="ChEBI" id="CHEBI:140395"/>
        <dbReference type="EC" id="2.7.7.6"/>
    </reaction>
</comment>
<comment type="subunit">
    <text evidence="1">The DNA-dependent RNA polymerase (vRNAP) consists of eight subunits encoded by early viral genes and termed according to their apparent molecular masses Rpo147, Rpo132, Rpo35, Rpo30, Rpo22, Rpo19, Rpo18, and Rpo7. The same holoenzyme, with the addition of the transcription-specificity factor RAP94, is used for early gene expression.</text>
</comment>
<comment type="subcellular location">
    <subcellularLocation>
        <location evidence="1">Virion</location>
    </subcellularLocation>
    <subcellularLocation>
        <location evidence="1">Host cytoplasm</location>
    </subcellularLocation>
    <text evidence="1">All the enzymes and other proteins required to synthesize early mRNAs are packaged within the virion core along with the DNA genome. This is necessary because viral early mRNAs are synthesized within minutes after virus entry into the cell and are extruded through pores in the core particle.</text>
</comment>
<comment type="induction">
    <text evidence="2">Expressed in the early phase of the viral replicative cycle.</text>
</comment>
<comment type="similarity">
    <text evidence="5">Belongs to the poxviridae DNA-directed RNA polymerase 30 kDa subunit family.</text>
</comment>